<evidence type="ECO:0000255" key="1">
    <source>
        <dbReference type="HAMAP-Rule" id="MF_00393"/>
    </source>
</evidence>
<comment type="catalytic activity">
    <reaction evidence="1">
        <text>sn-glycerol 3-phosphate + an acyl-CoA = a 1-acyl-sn-glycero-3-phosphate + CoA</text>
        <dbReference type="Rhea" id="RHEA:15325"/>
        <dbReference type="ChEBI" id="CHEBI:57287"/>
        <dbReference type="ChEBI" id="CHEBI:57597"/>
        <dbReference type="ChEBI" id="CHEBI:57970"/>
        <dbReference type="ChEBI" id="CHEBI:58342"/>
        <dbReference type="EC" id="2.3.1.15"/>
    </reaction>
</comment>
<comment type="pathway">
    <text evidence="1">Phospholipid metabolism; CDP-diacylglycerol biosynthesis; CDP-diacylglycerol from sn-glycerol 3-phosphate: step 1/3.</text>
</comment>
<comment type="subcellular location">
    <subcellularLocation>
        <location evidence="1">Cell inner membrane</location>
        <topology evidence="1">Peripheral membrane protein</topology>
        <orientation evidence="1">Cytoplasmic side</orientation>
    </subcellularLocation>
</comment>
<comment type="domain">
    <text evidence="1">The HXXXXD motif is essential for acyltransferase activity and may constitute the binding site for the phosphate moiety of the glycerol-3-phosphate.</text>
</comment>
<comment type="similarity">
    <text evidence="1">Belongs to the GPAT/DAPAT family.</text>
</comment>
<dbReference type="EC" id="2.3.1.15" evidence="1"/>
<dbReference type="EMBL" id="CP000563">
    <property type="protein sequence ID" value="ABN59691.1"/>
    <property type="molecule type" value="Genomic_DNA"/>
</dbReference>
<dbReference type="RefSeq" id="WP_011845444.1">
    <property type="nucleotide sequence ID" value="NC_009052.1"/>
</dbReference>
<dbReference type="SMR" id="A3CYX8"/>
<dbReference type="STRING" id="325240.Sbal_0157"/>
<dbReference type="KEGG" id="sbl:Sbal_0157"/>
<dbReference type="HOGENOM" id="CLU_015407_0_0_6"/>
<dbReference type="OrthoDB" id="335193at2"/>
<dbReference type="UniPathway" id="UPA00557">
    <property type="reaction ID" value="UER00612"/>
</dbReference>
<dbReference type="Proteomes" id="UP000001557">
    <property type="component" value="Chromosome"/>
</dbReference>
<dbReference type="GO" id="GO:0005886">
    <property type="term" value="C:plasma membrane"/>
    <property type="evidence" value="ECO:0007669"/>
    <property type="project" value="UniProtKB-SubCell"/>
</dbReference>
<dbReference type="GO" id="GO:0004366">
    <property type="term" value="F:glycerol-3-phosphate O-acyltransferase activity"/>
    <property type="evidence" value="ECO:0007669"/>
    <property type="project" value="UniProtKB-UniRule"/>
</dbReference>
<dbReference type="GO" id="GO:0016024">
    <property type="term" value="P:CDP-diacylglycerol biosynthetic process"/>
    <property type="evidence" value="ECO:0007669"/>
    <property type="project" value="UniProtKB-UniRule"/>
</dbReference>
<dbReference type="GO" id="GO:0006631">
    <property type="term" value="P:fatty acid metabolic process"/>
    <property type="evidence" value="ECO:0007669"/>
    <property type="project" value="TreeGrafter"/>
</dbReference>
<dbReference type="CDD" id="cd07993">
    <property type="entry name" value="LPLAT_DHAPAT-like"/>
    <property type="match status" value="1"/>
</dbReference>
<dbReference type="HAMAP" id="MF_00393">
    <property type="entry name" value="Glyc3P_acyltrans"/>
    <property type="match status" value="1"/>
</dbReference>
<dbReference type="InterPro" id="IPR022284">
    <property type="entry name" value="GPAT/DHAPAT"/>
</dbReference>
<dbReference type="InterPro" id="IPR045520">
    <property type="entry name" value="GPAT/DHAPAT_C"/>
</dbReference>
<dbReference type="InterPro" id="IPR041728">
    <property type="entry name" value="GPAT/DHAPAT_LPLAT"/>
</dbReference>
<dbReference type="InterPro" id="IPR028354">
    <property type="entry name" value="GPAT_PlsB"/>
</dbReference>
<dbReference type="InterPro" id="IPR002123">
    <property type="entry name" value="Plipid/glycerol_acylTrfase"/>
</dbReference>
<dbReference type="NCBIfam" id="TIGR03703">
    <property type="entry name" value="plsB"/>
    <property type="match status" value="1"/>
</dbReference>
<dbReference type="NCBIfam" id="NF003441">
    <property type="entry name" value="PRK04974.1"/>
    <property type="match status" value="1"/>
</dbReference>
<dbReference type="PANTHER" id="PTHR12563:SF17">
    <property type="entry name" value="DIHYDROXYACETONE PHOSPHATE ACYLTRANSFERASE"/>
    <property type="match status" value="1"/>
</dbReference>
<dbReference type="PANTHER" id="PTHR12563">
    <property type="entry name" value="GLYCEROL-3-PHOSPHATE ACYLTRANSFERASE"/>
    <property type="match status" value="1"/>
</dbReference>
<dbReference type="Pfam" id="PF01553">
    <property type="entry name" value="Acyltransferase"/>
    <property type="match status" value="1"/>
</dbReference>
<dbReference type="Pfam" id="PF19277">
    <property type="entry name" value="GPAT_C"/>
    <property type="match status" value="1"/>
</dbReference>
<dbReference type="PIRSF" id="PIRSF500064">
    <property type="entry name" value="GPAT"/>
    <property type="match status" value="1"/>
</dbReference>
<dbReference type="PIRSF" id="PIRSF000437">
    <property type="entry name" value="GPAT_DHAPAT"/>
    <property type="match status" value="1"/>
</dbReference>
<dbReference type="SMART" id="SM00563">
    <property type="entry name" value="PlsC"/>
    <property type="match status" value="1"/>
</dbReference>
<dbReference type="SUPFAM" id="SSF69593">
    <property type="entry name" value="Glycerol-3-phosphate (1)-acyltransferase"/>
    <property type="match status" value="1"/>
</dbReference>
<accession>A3CYX8</accession>
<gene>
    <name evidence="1" type="primary">plsB</name>
    <name type="ordered locus">Sbal_0157</name>
</gene>
<reference key="1">
    <citation type="submission" date="2007-02" db="EMBL/GenBank/DDBJ databases">
        <title>Complete sequence of chromosome of Shewanella baltica OS155.</title>
        <authorList>
            <consortium name="US DOE Joint Genome Institute"/>
            <person name="Copeland A."/>
            <person name="Lucas S."/>
            <person name="Lapidus A."/>
            <person name="Barry K."/>
            <person name="Detter J.C."/>
            <person name="Glavina del Rio T."/>
            <person name="Hammon N."/>
            <person name="Israni S."/>
            <person name="Dalin E."/>
            <person name="Tice H."/>
            <person name="Pitluck S."/>
            <person name="Sims D.R."/>
            <person name="Brettin T."/>
            <person name="Bruce D."/>
            <person name="Han C."/>
            <person name="Tapia R."/>
            <person name="Brainard J."/>
            <person name="Schmutz J."/>
            <person name="Larimer F."/>
            <person name="Land M."/>
            <person name="Hauser L."/>
            <person name="Kyrpides N."/>
            <person name="Mikhailova N."/>
            <person name="Brettar I."/>
            <person name="Klappenbach J."/>
            <person name="Konstantinidis K."/>
            <person name="Rodrigues J."/>
            <person name="Tiedje J."/>
            <person name="Richardson P."/>
        </authorList>
    </citation>
    <scope>NUCLEOTIDE SEQUENCE [LARGE SCALE GENOMIC DNA]</scope>
    <source>
        <strain>OS155 / ATCC BAA-1091</strain>
    </source>
</reference>
<organism>
    <name type="scientific">Shewanella baltica (strain OS155 / ATCC BAA-1091)</name>
    <dbReference type="NCBI Taxonomy" id="325240"/>
    <lineage>
        <taxon>Bacteria</taxon>
        <taxon>Pseudomonadati</taxon>
        <taxon>Pseudomonadota</taxon>
        <taxon>Gammaproteobacteria</taxon>
        <taxon>Alteromonadales</taxon>
        <taxon>Shewanellaceae</taxon>
        <taxon>Shewanella</taxon>
    </lineage>
</organism>
<proteinExistence type="inferred from homology"/>
<keyword id="KW-0012">Acyltransferase</keyword>
<keyword id="KW-0997">Cell inner membrane</keyword>
<keyword id="KW-1003">Cell membrane</keyword>
<keyword id="KW-0444">Lipid biosynthesis</keyword>
<keyword id="KW-0443">Lipid metabolism</keyword>
<keyword id="KW-0472">Membrane</keyword>
<keyword id="KW-0594">Phospholipid biosynthesis</keyword>
<keyword id="KW-1208">Phospholipid metabolism</keyword>
<keyword id="KW-1185">Reference proteome</keyword>
<keyword id="KW-0808">Transferase</keyword>
<feature type="chain" id="PRO_1000049454" description="Glycerol-3-phosphate acyltransferase">
    <location>
        <begin position="1"/>
        <end position="807"/>
    </location>
</feature>
<feature type="short sequence motif" description="HXXXXD motif">
    <location>
        <begin position="308"/>
        <end position="313"/>
    </location>
</feature>
<name>PLSB_SHEB5</name>
<protein>
    <recommendedName>
        <fullName evidence="1">Glycerol-3-phosphate acyltransferase</fullName>
        <shortName evidence="1">GPAT</shortName>
        <ecNumber evidence="1">2.3.1.15</ecNumber>
    </recommendedName>
</protein>
<sequence>MPKHDSLWLKSLRWIQKHLVHTIVVPQDPFADLNLDASRPLAYVMKTESLSDIAALSEITAKLGLPSPYEPLVANGVIAPRVVCLQGRKPLFGERAGNEPFLECFMRLLAVHKERPELDIQLVPVSLYWGRTPGKEDDTMKAAVFERENPTWLRKCLMILFLGRHNFVQFSNAVSLRYMADEHGTDMGIAHKLARVARVHFRRQRKVMTGPVLPNRQALFHSLLKSESLRKAIQEEAANKKISETQARETAIEYLDEIAADYSDSLVRIAERFLTWLWNKLYSGINIKGAEQVRQLHHDGHEIVYVPCHRSHMDYLLLSYILYYQGMVPPHIAAGINLNFWPAGPMFRRGGAFFIRRSFNGNKLYTAVFREYLDQLFAKGYSVEYFSEGGRSRTGRLLAPKTGMIAMTMNSVLRGIERPVTLVPVYLGYDHVMEVATYHKELSGKKKKKESVWQVFGAIRKLGNFGQGYVNFGEPITLQNFLNERAPNWRTELADDPEQKPSWLTPAVNVLANRVMTNINDAAAASSVTLTSLVLLATDQNALERSLLERQLDLYLTLLKKVPYTTYTSVAEGDGKHLVQQGLELNKFVVCADPLGEIVSIEASQAVSMTYYRNNIIHLFIVPSLIASCLTHNKQIPRQQVVSIVADFYPLLKAELFMGIKDVPAYVNQVLDFFIEQGLVVETDTLTVVPEHTSQLLLLASSVSETLQRYAIIFNLLANRPKMERSELESESHLLAQRLGALHGITAPEFYDKKLYGTLSVKLKELGYLADNQDKSNINRIRDQANSLLRPSVKQTIVASVTAEHTV</sequence>